<dbReference type="EMBL" id="EF380354">
    <property type="protein sequence ID" value="ABQ52533.1"/>
    <property type="molecule type" value="Genomic_DNA"/>
</dbReference>
<dbReference type="RefSeq" id="YP_001294284.1">
    <property type="nucleotide sequence ID" value="NC_009600.1"/>
</dbReference>
<dbReference type="SMR" id="A6MMV8"/>
<dbReference type="GeneID" id="5236787"/>
<dbReference type="GO" id="GO:0009535">
    <property type="term" value="C:chloroplast thylakoid membrane"/>
    <property type="evidence" value="ECO:0007669"/>
    <property type="project" value="UniProtKB-SubCell"/>
</dbReference>
<dbReference type="GO" id="GO:0009539">
    <property type="term" value="C:photosystem II reaction center"/>
    <property type="evidence" value="ECO:0007669"/>
    <property type="project" value="InterPro"/>
</dbReference>
<dbReference type="GO" id="GO:0015979">
    <property type="term" value="P:photosynthesis"/>
    <property type="evidence" value="ECO:0007669"/>
    <property type="project" value="UniProtKB-UniRule"/>
</dbReference>
<dbReference type="Gene3D" id="6.10.250.2070">
    <property type="match status" value="1"/>
</dbReference>
<dbReference type="HAMAP" id="MF_01305">
    <property type="entry name" value="PSII_PsbJ"/>
    <property type="match status" value="1"/>
</dbReference>
<dbReference type="InterPro" id="IPR002682">
    <property type="entry name" value="PSII_PsbJ"/>
</dbReference>
<dbReference type="InterPro" id="IPR037267">
    <property type="entry name" value="PSII_PsbJ_sf"/>
</dbReference>
<dbReference type="NCBIfam" id="NF002722">
    <property type="entry name" value="PRK02565.1"/>
    <property type="match status" value="1"/>
</dbReference>
<dbReference type="PANTHER" id="PTHR34812">
    <property type="entry name" value="PHOTOSYSTEM II REACTION CENTER PROTEIN J"/>
    <property type="match status" value="1"/>
</dbReference>
<dbReference type="PANTHER" id="PTHR34812:SF3">
    <property type="entry name" value="PHOTOSYSTEM II REACTION CENTER PROTEIN J"/>
    <property type="match status" value="1"/>
</dbReference>
<dbReference type="Pfam" id="PF01788">
    <property type="entry name" value="PsbJ"/>
    <property type="match status" value="1"/>
</dbReference>
<dbReference type="SUPFAM" id="SSF161021">
    <property type="entry name" value="Photosystem II reaction center protein J, PsbJ"/>
    <property type="match status" value="1"/>
</dbReference>
<protein>
    <recommendedName>
        <fullName evidence="1">Photosystem II reaction center protein J</fullName>
        <shortName evidence="1">PSII-J</shortName>
    </recommendedName>
</protein>
<proteinExistence type="inferred from homology"/>
<accession>A6MMV8</accession>
<gene>
    <name evidence="1" type="primary">psbJ</name>
</gene>
<reference key="1">
    <citation type="journal article" date="2007" name="Mol. Phylogenet. Evol.">
        <title>Phylogenetic and evolutionary implications of complete chloroplast genome sequences of four early-diverging angiosperms: Buxus (Buxaceae), Chloranthus (Chloranthaceae), Dioscorea (Dioscoreaceae), and Illicium (Schisandraceae).</title>
        <authorList>
            <person name="Hansen D.R."/>
            <person name="Dastidar S.G."/>
            <person name="Cai Z."/>
            <person name="Penaflor C."/>
            <person name="Kuehl J.V."/>
            <person name="Boore J.L."/>
            <person name="Jansen R.K."/>
        </authorList>
    </citation>
    <scope>NUCLEOTIDE SEQUENCE [LARGE SCALE GENOMIC DNA]</scope>
</reference>
<organism>
    <name type="scientific">Illicium oligandrum</name>
    <name type="common">Star anise</name>
    <dbReference type="NCBI Taxonomy" id="145286"/>
    <lineage>
        <taxon>Eukaryota</taxon>
        <taxon>Viridiplantae</taxon>
        <taxon>Streptophyta</taxon>
        <taxon>Embryophyta</taxon>
        <taxon>Tracheophyta</taxon>
        <taxon>Spermatophyta</taxon>
        <taxon>Magnoliopsida</taxon>
        <taxon>Austrobaileyales</taxon>
        <taxon>Schisandraceae</taxon>
        <taxon>Illicium</taxon>
    </lineage>
</organism>
<feature type="chain" id="PRO_0000322060" description="Photosystem II reaction center protein J">
    <location>
        <begin position="1"/>
        <end position="40"/>
    </location>
</feature>
<feature type="transmembrane region" description="Helical" evidence="1">
    <location>
        <begin position="8"/>
        <end position="28"/>
    </location>
</feature>
<evidence type="ECO:0000255" key="1">
    <source>
        <dbReference type="HAMAP-Rule" id="MF_01305"/>
    </source>
</evidence>
<keyword id="KW-0150">Chloroplast</keyword>
<keyword id="KW-0472">Membrane</keyword>
<keyword id="KW-0602">Photosynthesis</keyword>
<keyword id="KW-0604">Photosystem II</keyword>
<keyword id="KW-0934">Plastid</keyword>
<keyword id="KW-0674">Reaction center</keyword>
<keyword id="KW-0793">Thylakoid</keyword>
<keyword id="KW-0812">Transmembrane</keyword>
<keyword id="KW-1133">Transmembrane helix</keyword>
<geneLocation type="chloroplast"/>
<comment type="function">
    <text evidence="1">One of the components of the core complex of photosystem II (PSII). PSII is a light-driven water:plastoquinone oxidoreductase that uses light energy to abstract electrons from H(2)O, generating O(2) and a proton gradient subsequently used for ATP formation. It consists of a core antenna complex that captures photons, and an electron transfer chain that converts photonic excitation into a charge separation.</text>
</comment>
<comment type="subunit">
    <text evidence="1">PSII is composed of 1 copy each of membrane proteins PsbA, PsbB, PsbC, PsbD, PsbE, PsbF, PsbH, PsbI, PsbJ, PsbK, PsbL, PsbM, PsbT, PsbX, PsbY, PsbZ, Psb30/Ycf12, at least 3 peripheral proteins of the oxygen-evolving complex and a large number of cofactors. It forms dimeric complexes.</text>
</comment>
<comment type="subcellular location">
    <subcellularLocation>
        <location evidence="1">Plastid</location>
        <location evidence="1">Chloroplast thylakoid membrane</location>
        <topology evidence="1">Single-pass membrane protein</topology>
    </subcellularLocation>
</comment>
<comment type="similarity">
    <text evidence="1">Belongs to the PsbJ family.</text>
</comment>
<name>PSBJ_ILLOL</name>
<sequence>MADTTGRIPLWLIGTVTGIPVIGSMGIFFYGSYSGLGSSL</sequence>